<accession>B1YKB2</accession>
<comment type="function">
    <text evidence="1">Component of the acetyl coenzyme A carboxylase (ACC) complex. First, biotin carboxylase catalyzes the carboxylation of biotin on its carrier protein (BCCP) and then the CO(2) group is transferred by the carboxyltransferase to acetyl-CoA to form malonyl-CoA.</text>
</comment>
<comment type="catalytic activity">
    <reaction evidence="1">
        <text>N(6)-carboxybiotinyl-L-lysyl-[protein] + acetyl-CoA = N(6)-biotinyl-L-lysyl-[protein] + malonyl-CoA</text>
        <dbReference type="Rhea" id="RHEA:54728"/>
        <dbReference type="Rhea" id="RHEA-COMP:10505"/>
        <dbReference type="Rhea" id="RHEA-COMP:10506"/>
        <dbReference type="ChEBI" id="CHEBI:57288"/>
        <dbReference type="ChEBI" id="CHEBI:57384"/>
        <dbReference type="ChEBI" id="CHEBI:83144"/>
        <dbReference type="ChEBI" id="CHEBI:83145"/>
        <dbReference type="EC" id="2.1.3.15"/>
    </reaction>
</comment>
<comment type="pathway">
    <text evidence="1">Lipid metabolism; malonyl-CoA biosynthesis; malonyl-CoA from acetyl-CoA: step 1/1.</text>
</comment>
<comment type="subunit">
    <text evidence="1">Acetyl-CoA carboxylase is a heterohexamer composed of biotin carboxyl carrier protein (AccB), biotin carboxylase (AccC) and two subunits each of ACCase subunit alpha (AccA) and ACCase subunit beta (AccD).</text>
</comment>
<comment type="subcellular location">
    <subcellularLocation>
        <location evidence="1">Cytoplasm</location>
    </subcellularLocation>
</comment>
<comment type="similarity">
    <text evidence="1">Belongs to the AccA family.</text>
</comment>
<name>ACCA_EXIS2</name>
<feature type="chain" id="PRO_1000134492" description="Acetyl-coenzyme A carboxylase carboxyl transferase subunit alpha">
    <location>
        <begin position="1"/>
        <end position="311"/>
    </location>
</feature>
<feature type="domain" description="CoA carboxyltransferase C-terminal" evidence="2">
    <location>
        <begin position="32"/>
        <end position="289"/>
    </location>
</feature>
<dbReference type="EC" id="2.1.3.15" evidence="1"/>
<dbReference type="EMBL" id="CP001022">
    <property type="protein sequence ID" value="ACB61665.1"/>
    <property type="molecule type" value="Genomic_DNA"/>
</dbReference>
<dbReference type="RefSeq" id="WP_012371082.1">
    <property type="nucleotide sequence ID" value="NC_010556.1"/>
</dbReference>
<dbReference type="SMR" id="B1YKB2"/>
<dbReference type="STRING" id="262543.Exig_2213"/>
<dbReference type="KEGG" id="esi:Exig_2213"/>
<dbReference type="eggNOG" id="COG0825">
    <property type="taxonomic scope" value="Bacteria"/>
</dbReference>
<dbReference type="HOGENOM" id="CLU_015486_0_2_9"/>
<dbReference type="OrthoDB" id="9808023at2"/>
<dbReference type="UniPathway" id="UPA00655">
    <property type="reaction ID" value="UER00711"/>
</dbReference>
<dbReference type="Proteomes" id="UP000001681">
    <property type="component" value="Chromosome"/>
</dbReference>
<dbReference type="GO" id="GO:0009317">
    <property type="term" value="C:acetyl-CoA carboxylase complex"/>
    <property type="evidence" value="ECO:0007669"/>
    <property type="project" value="InterPro"/>
</dbReference>
<dbReference type="GO" id="GO:0003989">
    <property type="term" value="F:acetyl-CoA carboxylase activity"/>
    <property type="evidence" value="ECO:0007669"/>
    <property type="project" value="InterPro"/>
</dbReference>
<dbReference type="GO" id="GO:0005524">
    <property type="term" value="F:ATP binding"/>
    <property type="evidence" value="ECO:0007669"/>
    <property type="project" value="UniProtKB-KW"/>
</dbReference>
<dbReference type="GO" id="GO:0016743">
    <property type="term" value="F:carboxyl- or carbamoyltransferase activity"/>
    <property type="evidence" value="ECO:0007669"/>
    <property type="project" value="UniProtKB-UniRule"/>
</dbReference>
<dbReference type="GO" id="GO:0006633">
    <property type="term" value="P:fatty acid biosynthetic process"/>
    <property type="evidence" value="ECO:0007669"/>
    <property type="project" value="UniProtKB-KW"/>
</dbReference>
<dbReference type="GO" id="GO:2001295">
    <property type="term" value="P:malonyl-CoA biosynthetic process"/>
    <property type="evidence" value="ECO:0007669"/>
    <property type="project" value="UniProtKB-UniRule"/>
</dbReference>
<dbReference type="Gene3D" id="3.90.226.10">
    <property type="entry name" value="2-enoyl-CoA Hydratase, Chain A, domain 1"/>
    <property type="match status" value="1"/>
</dbReference>
<dbReference type="HAMAP" id="MF_00823">
    <property type="entry name" value="AcetylCoA_CT_alpha"/>
    <property type="match status" value="1"/>
</dbReference>
<dbReference type="InterPro" id="IPR001095">
    <property type="entry name" value="Acetyl_CoA_COase_a_su"/>
</dbReference>
<dbReference type="InterPro" id="IPR029045">
    <property type="entry name" value="ClpP/crotonase-like_dom_sf"/>
</dbReference>
<dbReference type="InterPro" id="IPR011763">
    <property type="entry name" value="COA_CT_C"/>
</dbReference>
<dbReference type="NCBIfam" id="TIGR00513">
    <property type="entry name" value="accA"/>
    <property type="match status" value="1"/>
</dbReference>
<dbReference type="NCBIfam" id="NF041504">
    <property type="entry name" value="AccA_sub"/>
    <property type="match status" value="1"/>
</dbReference>
<dbReference type="NCBIfam" id="NF004344">
    <property type="entry name" value="PRK05724.1"/>
    <property type="match status" value="1"/>
</dbReference>
<dbReference type="PANTHER" id="PTHR42853">
    <property type="entry name" value="ACETYL-COENZYME A CARBOXYLASE CARBOXYL TRANSFERASE SUBUNIT ALPHA"/>
    <property type="match status" value="1"/>
</dbReference>
<dbReference type="PANTHER" id="PTHR42853:SF3">
    <property type="entry name" value="ACETYL-COENZYME A CARBOXYLASE CARBOXYL TRANSFERASE SUBUNIT ALPHA, CHLOROPLASTIC"/>
    <property type="match status" value="1"/>
</dbReference>
<dbReference type="Pfam" id="PF03255">
    <property type="entry name" value="ACCA"/>
    <property type="match status" value="1"/>
</dbReference>
<dbReference type="PRINTS" id="PR01069">
    <property type="entry name" value="ACCCTRFRASEA"/>
</dbReference>
<dbReference type="SUPFAM" id="SSF52096">
    <property type="entry name" value="ClpP/crotonase"/>
    <property type="match status" value="1"/>
</dbReference>
<dbReference type="PROSITE" id="PS50989">
    <property type="entry name" value="COA_CT_CTER"/>
    <property type="match status" value="1"/>
</dbReference>
<organism>
    <name type="scientific">Exiguobacterium sibiricum (strain DSM 17290 / CCUG 55495 / CIP 109462 / JCM 13490 / 255-15)</name>
    <dbReference type="NCBI Taxonomy" id="262543"/>
    <lineage>
        <taxon>Bacteria</taxon>
        <taxon>Bacillati</taxon>
        <taxon>Bacillota</taxon>
        <taxon>Bacilli</taxon>
        <taxon>Bacillales</taxon>
        <taxon>Bacillales Family XII. Incertae Sedis</taxon>
        <taxon>Exiguobacterium</taxon>
    </lineage>
</organism>
<proteinExistence type="inferred from homology"/>
<reference key="1">
    <citation type="submission" date="2008-04" db="EMBL/GenBank/DDBJ databases">
        <title>Complete sequence of chromosome of Exiguobacterium sibiricum 255-15.</title>
        <authorList>
            <consortium name="US DOE Joint Genome Institute"/>
            <person name="Copeland A."/>
            <person name="Lucas S."/>
            <person name="Lapidus A."/>
            <person name="Glavina del Rio T."/>
            <person name="Dalin E."/>
            <person name="Tice H."/>
            <person name="Bruce D."/>
            <person name="Goodwin L."/>
            <person name="Pitluck S."/>
            <person name="Kiss H."/>
            <person name="Chertkov O."/>
            <person name="Monk C."/>
            <person name="Brettin T."/>
            <person name="Detter J.C."/>
            <person name="Han C."/>
            <person name="Kuske C.R."/>
            <person name="Schmutz J."/>
            <person name="Larimer F."/>
            <person name="Land M."/>
            <person name="Hauser L."/>
            <person name="Kyrpides N."/>
            <person name="Mikhailova N."/>
            <person name="Vishnivetskaya T."/>
            <person name="Rodrigues D.F."/>
            <person name="Gilichinsky D."/>
            <person name="Tiedje J."/>
            <person name="Richardson P."/>
        </authorList>
    </citation>
    <scope>NUCLEOTIDE SEQUENCE [LARGE SCALE GENOMIC DNA]</scope>
    <source>
        <strain>DSM 17290 / CCUG 55495 / CIP 109462 / JCM 13490 / 255-15</strain>
    </source>
</reference>
<keyword id="KW-0067">ATP-binding</keyword>
<keyword id="KW-0963">Cytoplasm</keyword>
<keyword id="KW-0275">Fatty acid biosynthesis</keyword>
<keyword id="KW-0276">Fatty acid metabolism</keyword>
<keyword id="KW-0444">Lipid biosynthesis</keyword>
<keyword id="KW-0443">Lipid metabolism</keyword>
<keyword id="KW-0547">Nucleotide-binding</keyword>
<keyword id="KW-1185">Reference proteome</keyword>
<keyword id="KW-0808">Transferase</keyword>
<protein>
    <recommendedName>
        <fullName evidence="1">Acetyl-coenzyme A carboxylase carboxyl transferase subunit alpha</fullName>
        <shortName evidence="1">ACCase subunit alpha</shortName>
        <shortName evidence="1">Acetyl-CoA carboxylase carboxyltransferase subunit alpha</shortName>
        <ecNumber evidence="1">2.1.3.15</ecNumber>
    </recommendedName>
</protein>
<evidence type="ECO:0000255" key="1">
    <source>
        <dbReference type="HAMAP-Rule" id="MF_00823"/>
    </source>
</evidence>
<evidence type="ECO:0000255" key="2">
    <source>
        <dbReference type="PROSITE-ProRule" id="PRU01137"/>
    </source>
</evidence>
<sequence length="311" mass="34455">MQPFDQPVIALRKKILELHDMAETQGLDFKEELNLLEERLRRLELDIYGNMKAWNRVQLARHPERPTTLDYVRLICDDFIELHGDRHGYDDAAIVGGIAMLNGQAVTVIGHQRGKDTKENIRRNFGMPHPEGYRKALRLMQQAVKFNRPIITFIDTKGAYPGRAAEERGQSEAIAKNLFEMAGMPVPIISIVIGEGGSGGALGIGVCDQLLMLENSTYSVISPEGAAALLWKDASLAEKAAESMQITAPDLLRLGIADGIISEVIGGAHLDVSLQADKLKSVLEQKLAQLTRLTPEQLIEKRTEKYHQIGT</sequence>
<gene>
    <name evidence="1" type="primary">accA</name>
    <name type="ordered locus">Exig_2213</name>
</gene>